<name>QUEA_SYNR3</name>
<reference key="1">
    <citation type="submission" date="2006-05" db="EMBL/GenBank/DDBJ databases">
        <authorList>
            <consortium name="Genoscope"/>
        </authorList>
    </citation>
    <scope>NUCLEOTIDE SEQUENCE [LARGE SCALE GENOMIC DNA]</scope>
    <source>
        <strain>RCC307</strain>
    </source>
</reference>
<feature type="chain" id="PRO_1000015299" description="S-adenosylmethionine:tRNA ribosyltransferase-isomerase">
    <location>
        <begin position="1"/>
        <end position="363"/>
    </location>
</feature>
<accession>A5GUY6</accession>
<comment type="function">
    <text evidence="1">Transfers and isomerizes the ribose moiety from AdoMet to the 7-aminomethyl group of 7-deazaguanine (preQ1-tRNA) to give epoxyqueuosine (oQ-tRNA).</text>
</comment>
<comment type="catalytic activity">
    <reaction evidence="1">
        <text>7-aminomethyl-7-carbaguanosine(34) in tRNA + S-adenosyl-L-methionine = epoxyqueuosine(34) in tRNA + adenine + L-methionine + 2 H(+)</text>
        <dbReference type="Rhea" id="RHEA:32155"/>
        <dbReference type="Rhea" id="RHEA-COMP:10342"/>
        <dbReference type="Rhea" id="RHEA-COMP:18582"/>
        <dbReference type="ChEBI" id="CHEBI:15378"/>
        <dbReference type="ChEBI" id="CHEBI:16708"/>
        <dbReference type="ChEBI" id="CHEBI:57844"/>
        <dbReference type="ChEBI" id="CHEBI:59789"/>
        <dbReference type="ChEBI" id="CHEBI:82833"/>
        <dbReference type="ChEBI" id="CHEBI:194443"/>
        <dbReference type="EC" id="2.4.99.17"/>
    </reaction>
</comment>
<comment type="pathway">
    <text evidence="1">tRNA modification; tRNA-queuosine biosynthesis.</text>
</comment>
<comment type="subunit">
    <text evidence="1">Monomer.</text>
</comment>
<comment type="subcellular location">
    <subcellularLocation>
        <location evidence="1">Cytoplasm</location>
    </subcellularLocation>
</comment>
<comment type="similarity">
    <text evidence="1">Belongs to the QueA family.</text>
</comment>
<evidence type="ECO:0000255" key="1">
    <source>
        <dbReference type="HAMAP-Rule" id="MF_00113"/>
    </source>
</evidence>
<protein>
    <recommendedName>
        <fullName evidence="1">S-adenosylmethionine:tRNA ribosyltransferase-isomerase</fullName>
        <ecNumber evidence="1">2.4.99.17</ecNumber>
    </recommendedName>
    <alternativeName>
        <fullName evidence="1">Queuosine biosynthesis protein QueA</fullName>
    </alternativeName>
</protein>
<dbReference type="EC" id="2.4.99.17" evidence="1"/>
<dbReference type="EMBL" id="CT978603">
    <property type="protein sequence ID" value="CAK28695.1"/>
    <property type="molecule type" value="Genomic_DNA"/>
</dbReference>
<dbReference type="SMR" id="A5GUY6"/>
<dbReference type="STRING" id="316278.SynRCC307_1792"/>
<dbReference type="KEGG" id="syr:SynRCC307_1792"/>
<dbReference type="eggNOG" id="COG0809">
    <property type="taxonomic scope" value="Bacteria"/>
</dbReference>
<dbReference type="HOGENOM" id="CLU_039110_1_0_3"/>
<dbReference type="OrthoDB" id="9805933at2"/>
<dbReference type="UniPathway" id="UPA00392"/>
<dbReference type="Proteomes" id="UP000001115">
    <property type="component" value="Chromosome"/>
</dbReference>
<dbReference type="GO" id="GO:0005737">
    <property type="term" value="C:cytoplasm"/>
    <property type="evidence" value="ECO:0007669"/>
    <property type="project" value="UniProtKB-SubCell"/>
</dbReference>
<dbReference type="GO" id="GO:0051075">
    <property type="term" value="F:S-adenosylmethionine:tRNA ribosyltransferase-isomerase activity"/>
    <property type="evidence" value="ECO:0007669"/>
    <property type="project" value="UniProtKB-EC"/>
</dbReference>
<dbReference type="GO" id="GO:0008616">
    <property type="term" value="P:queuosine biosynthetic process"/>
    <property type="evidence" value="ECO:0007669"/>
    <property type="project" value="UniProtKB-UniRule"/>
</dbReference>
<dbReference type="GO" id="GO:0002099">
    <property type="term" value="P:tRNA wobble guanine modification"/>
    <property type="evidence" value="ECO:0007669"/>
    <property type="project" value="TreeGrafter"/>
</dbReference>
<dbReference type="Gene3D" id="2.40.10.240">
    <property type="entry name" value="QueA-like"/>
    <property type="match status" value="1"/>
</dbReference>
<dbReference type="Gene3D" id="3.40.1780.10">
    <property type="entry name" value="QueA-like"/>
    <property type="match status" value="2"/>
</dbReference>
<dbReference type="HAMAP" id="MF_00113">
    <property type="entry name" value="QueA"/>
    <property type="match status" value="1"/>
</dbReference>
<dbReference type="InterPro" id="IPR003699">
    <property type="entry name" value="QueA"/>
</dbReference>
<dbReference type="InterPro" id="IPR042118">
    <property type="entry name" value="QueA_dom1"/>
</dbReference>
<dbReference type="InterPro" id="IPR042119">
    <property type="entry name" value="QueA_dom2"/>
</dbReference>
<dbReference type="InterPro" id="IPR036100">
    <property type="entry name" value="QueA_sf"/>
</dbReference>
<dbReference type="NCBIfam" id="NF001140">
    <property type="entry name" value="PRK00147.1"/>
    <property type="match status" value="1"/>
</dbReference>
<dbReference type="NCBIfam" id="TIGR00113">
    <property type="entry name" value="queA"/>
    <property type="match status" value="1"/>
</dbReference>
<dbReference type="PANTHER" id="PTHR30307">
    <property type="entry name" value="S-ADENOSYLMETHIONINE:TRNA RIBOSYLTRANSFERASE-ISOMERASE"/>
    <property type="match status" value="1"/>
</dbReference>
<dbReference type="PANTHER" id="PTHR30307:SF0">
    <property type="entry name" value="S-ADENOSYLMETHIONINE:TRNA RIBOSYLTRANSFERASE-ISOMERASE"/>
    <property type="match status" value="1"/>
</dbReference>
<dbReference type="Pfam" id="PF02547">
    <property type="entry name" value="Queuosine_synth"/>
    <property type="match status" value="1"/>
</dbReference>
<dbReference type="SUPFAM" id="SSF111337">
    <property type="entry name" value="QueA-like"/>
    <property type="match status" value="1"/>
</dbReference>
<proteinExistence type="inferred from homology"/>
<gene>
    <name evidence="1" type="primary">queA</name>
    <name type="ordered locus">SynRCC307_1792</name>
</gene>
<sequence>MLIDPRDSLLSSYDYELPEACIAQRPLEPRHAARLLMVEPEAGCRDRQVWDLLEELEPGDLLVVNDTRVLRARLQVRRAGGGLGELLVLQPQGQGQWLCLARPAKRLRPGDSIALVADGEPDLPLQVLAVEESSGGRLIQFPPECVDAASLEPLLLRYGVMPLPPYIHQQDESDNARYQTCFASKPGAVAAPTAGLHLSEELLAALTQKGIERASVTLHVGLGTFRPVETEDLSQLELHSEWVEVSEALVQAVAACRKRGGRVIAVGTTSVRSLEGVAALHGGVLQPFRGPVNLVIQPGFRFAVVQGLLTNFHLPKSSLLLLVSALIGRERLLQLYQHAITAGYRFYSYGDAMWIPPECSRQP</sequence>
<keyword id="KW-0963">Cytoplasm</keyword>
<keyword id="KW-0671">Queuosine biosynthesis</keyword>
<keyword id="KW-1185">Reference proteome</keyword>
<keyword id="KW-0949">S-adenosyl-L-methionine</keyword>
<keyword id="KW-0808">Transferase</keyword>
<organism>
    <name type="scientific">Synechococcus sp. (strain RCC307)</name>
    <dbReference type="NCBI Taxonomy" id="316278"/>
    <lineage>
        <taxon>Bacteria</taxon>
        <taxon>Bacillati</taxon>
        <taxon>Cyanobacteriota</taxon>
        <taxon>Cyanophyceae</taxon>
        <taxon>Synechococcales</taxon>
        <taxon>Synechococcaceae</taxon>
        <taxon>Synechococcus</taxon>
    </lineage>
</organism>